<sequence length="329" mass="38062">MRCSLRGCVQGRGGKSGVSLSKFSPKKMSFFFIFMVIFCIQSLVALLQNGFLATVLGREWVRSQGLPAGDMIVACLAASRFCLHGVAIVNNFLTFVKLWSQKIYFSVLWDFVNTVNFWCTTWLAIFYCVKISSFSHPIFFWIKWRISRSVPRLLLGSLVIGGLSAVSSATGNTIAFQMTACENYTLAYRTRAFYAYYFRCHAMLMWIIPFFLFLLSVILLMFSLYRHLEHMRYRRPWSHDYSTQAHTMALKSLAFFLVFYTSYVLFLVISVTRVVNVHSSWHWAWEVITYMGILLHSTILTLSNPKMRKALKIKFPDLCVARSQDKRRG</sequence>
<accession>Q67ES7</accession>
<accession>Q4VHE8</accession>
<reference evidence="4" key="1">
    <citation type="submission" date="2003-08" db="EMBL/GenBank/DDBJ databases">
        <title>Identification of new putative rat taste receptors belonging to the T2R family.</title>
        <authorList>
            <person name="Conte C."/>
            <person name="Ebeling M."/>
            <person name="Marcuz A."/>
            <person name="Andres-Barquin P.J."/>
        </authorList>
    </citation>
    <scope>NUCLEOTIDE SEQUENCE [GENOMIC DNA]</scope>
    <source>
        <strain evidence="4">Sprague-Dawley</strain>
    </source>
</reference>
<reference evidence="3 5" key="2">
    <citation type="journal article" date="2005" name="Physiol. Genomics">
        <title>Genomic organization, expression, and function of bitter taste receptors (T2R) in mouse and rat.</title>
        <authorList>
            <person name="Wu S.V."/>
            <person name="Chen M.C."/>
            <person name="Rozengurt E."/>
        </authorList>
    </citation>
    <scope>NUCLEOTIDE SEQUENCE [MRNA] OF 28-329</scope>
    <scope>TISSUE SPECIFICITY</scope>
    <source>
        <strain evidence="2">Sprague-Dawley</strain>
        <tissue evidence="2">Gastrointestinal tract</tissue>
    </source>
</reference>
<proteinExistence type="evidence at transcript level"/>
<name>TR134_RAT</name>
<dbReference type="EMBL" id="AY362743">
    <property type="protein sequence ID" value="AAR13352.1"/>
    <property type="molecule type" value="Genomic_DNA"/>
</dbReference>
<dbReference type="EMBL" id="AY916511">
    <property type="protein sequence ID" value="AAX99134.1"/>
    <property type="status" value="ALT_INIT"/>
    <property type="molecule type" value="mRNA"/>
</dbReference>
<dbReference type="RefSeq" id="NP_001013937.1">
    <property type="nucleotide sequence ID" value="NM_001013915.1"/>
</dbReference>
<dbReference type="SMR" id="Q67ES7"/>
<dbReference type="FunCoup" id="Q67ES7">
    <property type="interactions" value="80"/>
</dbReference>
<dbReference type="STRING" id="10116.ENSRNOP00000038705"/>
<dbReference type="GlyCosmos" id="Q67ES7">
    <property type="glycosylation" value="1 site, No reported glycans"/>
</dbReference>
<dbReference type="GlyGen" id="Q67ES7">
    <property type="glycosylation" value="2 sites"/>
</dbReference>
<dbReference type="PaxDb" id="10116-ENSRNOP00000038705"/>
<dbReference type="Ensembl" id="ENSRNOT00000030442.3">
    <property type="protein sequence ID" value="ENSRNOP00000038705.2"/>
    <property type="gene ID" value="ENSRNOG00000027510.3"/>
</dbReference>
<dbReference type="GeneID" id="295589"/>
<dbReference type="KEGG" id="rno:295589"/>
<dbReference type="UCSC" id="RGD:1359393">
    <property type="organism name" value="rat"/>
</dbReference>
<dbReference type="AGR" id="RGD:1359393"/>
<dbReference type="CTD" id="387511"/>
<dbReference type="RGD" id="1359393">
    <property type="gene designation" value="Tas2r134"/>
</dbReference>
<dbReference type="eggNOG" id="ENOG502S2SI">
    <property type="taxonomic scope" value="Eukaryota"/>
</dbReference>
<dbReference type="GeneTree" id="ENSGT01100000263477"/>
<dbReference type="HOGENOM" id="CLU_072337_1_1_1"/>
<dbReference type="InParanoid" id="Q67ES7"/>
<dbReference type="OMA" id="SHWYWAW"/>
<dbReference type="OrthoDB" id="8876749at2759"/>
<dbReference type="PhylomeDB" id="Q67ES7"/>
<dbReference type="TreeFam" id="TF335891"/>
<dbReference type="PRO" id="PR:Q67ES7"/>
<dbReference type="Proteomes" id="UP000002494">
    <property type="component" value="Chromosome 3"/>
</dbReference>
<dbReference type="GO" id="GO:0016020">
    <property type="term" value="C:membrane"/>
    <property type="evidence" value="ECO:0000318"/>
    <property type="project" value="GO_Central"/>
</dbReference>
<dbReference type="GO" id="GO:0033038">
    <property type="term" value="F:bitter taste receptor activity"/>
    <property type="evidence" value="ECO:0000318"/>
    <property type="project" value="GO_Central"/>
</dbReference>
<dbReference type="GO" id="GO:0004930">
    <property type="term" value="F:G protein-coupled receptor activity"/>
    <property type="evidence" value="ECO:0007669"/>
    <property type="project" value="UniProtKB-KW"/>
</dbReference>
<dbReference type="GO" id="GO:0001580">
    <property type="term" value="P:detection of chemical stimulus involved in sensory perception of bitter taste"/>
    <property type="evidence" value="ECO:0000314"/>
    <property type="project" value="MGI"/>
</dbReference>
<dbReference type="CDD" id="cd15017">
    <property type="entry name" value="7tm_TAS2R16"/>
    <property type="match status" value="1"/>
</dbReference>
<dbReference type="FunFam" id="1.20.1070.10:FF:000055">
    <property type="entry name" value="Taste receptor type 2"/>
    <property type="match status" value="1"/>
</dbReference>
<dbReference type="Gene3D" id="1.20.1070.10">
    <property type="entry name" value="Rhodopsin 7-helix transmembrane proteins"/>
    <property type="match status" value="1"/>
</dbReference>
<dbReference type="InterPro" id="IPR007960">
    <property type="entry name" value="TAS2R"/>
</dbReference>
<dbReference type="PANTHER" id="PTHR11394">
    <property type="entry name" value="TASTE RECEPTOR TYPE 2"/>
    <property type="match status" value="1"/>
</dbReference>
<dbReference type="PANTHER" id="PTHR11394:SF69">
    <property type="entry name" value="TASTE RECEPTOR TYPE 2 MEMBER 134"/>
    <property type="match status" value="1"/>
</dbReference>
<dbReference type="Pfam" id="PF05296">
    <property type="entry name" value="TAS2R"/>
    <property type="match status" value="1"/>
</dbReference>
<dbReference type="SUPFAM" id="SSF81321">
    <property type="entry name" value="Family A G protein-coupled receptor-like"/>
    <property type="match status" value="1"/>
</dbReference>
<keyword id="KW-0297">G-protein coupled receptor</keyword>
<keyword id="KW-0325">Glycoprotein</keyword>
<keyword id="KW-0472">Membrane</keyword>
<keyword id="KW-0675">Receptor</keyword>
<keyword id="KW-1185">Reference proteome</keyword>
<keyword id="KW-0716">Sensory transduction</keyword>
<keyword id="KW-0919">Taste</keyword>
<keyword id="KW-0807">Transducer</keyword>
<keyword id="KW-0812">Transmembrane</keyword>
<keyword id="KW-1133">Transmembrane helix</keyword>
<protein>
    <recommendedName>
        <fullName>Taste receptor type 2 member 134</fullName>
        <shortName>T2R134</shortName>
        <shortName>T2R34</shortName>
    </recommendedName>
    <alternativeName>
        <fullName>Taste receptor type 2 member 23</fullName>
        <shortName>T2R23</shortName>
    </alternativeName>
</protein>
<feature type="chain" id="PRO_0000247661" description="Taste receptor type 2 member 134">
    <location>
        <begin position="1"/>
        <end position="329"/>
    </location>
</feature>
<feature type="topological domain" description="Extracellular" evidence="1">
    <location>
        <begin position="1"/>
        <end position="27"/>
    </location>
</feature>
<feature type="transmembrane region" description="Helical; Name=1" evidence="1">
    <location>
        <begin position="28"/>
        <end position="48"/>
    </location>
</feature>
<feature type="topological domain" description="Cytoplasmic" evidence="1">
    <location>
        <begin position="49"/>
        <end position="68"/>
    </location>
</feature>
<feature type="transmembrane region" description="Helical; Name=2" evidence="1">
    <location>
        <begin position="69"/>
        <end position="89"/>
    </location>
</feature>
<feature type="topological domain" description="Extracellular" evidence="1">
    <location>
        <begin position="90"/>
        <end position="121"/>
    </location>
</feature>
<feature type="transmembrane region" description="Helical; Name=3" evidence="1">
    <location>
        <begin position="122"/>
        <end position="142"/>
    </location>
</feature>
<feature type="topological domain" description="Cytoplasmic" evidence="1">
    <location>
        <begin position="143"/>
        <end position="153"/>
    </location>
</feature>
<feature type="transmembrane region" description="Helical; Name=4" evidence="1">
    <location>
        <begin position="154"/>
        <end position="174"/>
    </location>
</feature>
<feature type="topological domain" description="Extracellular" evidence="1">
    <location>
        <begin position="175"/>
        <end position="201"/>
    </location>
</feature>
<feature type="transmembrane region" description="Helical; Name=5" evidence="1">
    <location>
        <begin position="202"/>
        <end position="222"/>
    </location>
</feature>
<feature type="topological domain" description="Cytoplasmic" evidence="1">
    <location>
        <begin position="223"/>
        <end position="251"/>
    </location>
</feature>
<feature type="transmembrane region" description="Helical; Name=6" evidence="1">
    <location>
        <begin position="252"/>
        <end position="272"/>
    </location>
</feature>
<feature type="topological domain" description="Extracellular" evidence="1">
    <location>
        <begin position="273"/>
        <end position="282"/>
    </location>
</feature>
<feature type="transmembrane region" description="Helical; Name=7" evidence="1">
    <location>
        <begin position="283"/>
        <end position="303"/>
    </location>
</feature>
<feature type="topological domain" description="Cytoplasmic" evidence="1">
    <location>
        <begin position="304"/>
        <end position="329"/>
    </location>
</feature>
<feature type="glycosylation site" description="N-linked (GlcNAc...) asparagine" evidence="1">
    <location>
        <position position="183"/>
    </location>
</feature>
<evidence type="ECO:0000255" key="1"/>
<evidence type="ECO:0000269" key="2">
    <source>
    </source>
</evidence>
<evidence type="ECO:0000305" key="3"/>
<evidence type="ECO:0000312" key="4">
    <source>
        <dbReference type="EMBL" id="AAR13352.1"/>
    </source>
</evidence>
<evidence type="ECO:0000312" key="5">
    <source>
        <dbReference type="EMBL" id="AAX99134.1"/>
    </source>
</evidence>
<evidence type="ECO:0000312" key="6">
    <source>
        <dbReference type="RGD" id="1359393"/>
    </source>
</evidence>
<comment type="function">
    <text evidence="3">Putative taste receptor which may play a role in the perception of bitterness.</text>
</comment>
<comment type="subcellular location">
    <subcellularLocation>
        <location evidence="3">Membrane</location>
        <topology evidence="3">Multi-pass membrane protein</topology>
    </subcellularLocation>
</comment>
<comment type="tissue specificity">
    <text evidence="2">Expressed in tongue and gastrointestinal tract.</text>
</comment>
<comment type="miscellaneous">
    <text evidence="3">Several bitter taste receptors are expressed in a single taste receptor cell.</text>
</comment>
<comment type="similarity">
    <text evidence="1">Belongs to the G-protein coupled receptor T2R family.</text>
</comment>
<comment type="sequence caution" evidence="3">
    <conflict type="erroneous initiation">
        <sequence resource="EMBL-CDS" id="AAX99134"/>
    </conflict>
</comment>
<gene>
    <name evidence="6" type="primary">Tas2r134</name>
    <name type="synonym">Tas2r23</name>
    <name type="synonym">Tas2r34</name>
</gene>
<organism>
    <name type="scientific">Rattus norvegicus</name>
    <name type="common">Rat</name>
    <dbReference type="NCBI Taxonomy" id="10116"/>
    <lineage>
        <taxon>Eukaryota</taxon>
        <taxon>Metazoa</taxon>
        <taxon>Chordata</taxon>
        <taxon>Craniata</taxon>
        <taxon>Vertebrata</taxon>
        <taxon>Euteleostomi</taxon>
        <taxon>Mammalia</taxon>
        <taxon>Eutheria</taxon>
        <taxon>Euarchontoglires</taxon>
        <taxon>Glires</taxon>
        <taxon>Rodentia</taxon>
        <taxon>Myomorpha</taxon>
        <taxon>Muroidea</taxon>
        <taxon>Muridae</taxon>
        <taxon>Murinae</taxon>
        <taxon>Rattus</taxon>
    </lineage>
</organism>